<sequence length="21" mass="2195">GKFLHSAGKFGKAFLGEVMIG</sequence>
<proteinExistence type="evidence at protein level"/>
<organism evidence="2">
    <name type="scientific">Xenopus borealis</name>
    <name type="common">Kenyan clawed frog</name>
    <dbReference type="NCBI Taxonomy" id="8354"/>
    <lineage>
        <taxon>Eukaryota</taxon>
        <taxon>Metazoa</taxon>
        <taxon>Chordata</taxon>
        <taxon>Craniata</taxon>
        <taxon>Vertebrata</taxon>
        <taxon>Euteleostomi</taxon>
        <taxon>Amphibia</taxon>
        <taxon>Batrachia</taxon>
        <taxon>Anura</taxon>
        <taxon>Pipoidea</taxon>
        <taxon>Pipidae</taxon>
        <taxon>Xenopodinae</taxon>
        <taxon>Xenopus</taxon>
        <taxon>Xenopus</taxon>
    </lineage>
</organism>
<reference evidence="3" key="1">
    <citation type="journal article" date="2010" name="Comp. Biochem. Physiol.">
        <title>Antimicrobial peptides with therapeutic potential from skin secretions of the Marsabit clawed frog Xenopus borealis (Pipidae).</title>
        <authorList>
            <person name="Mechkarska M."/>
            <person name="Ahmed E."/>
            <person name="Coquet L."/>
            <person name="Leprince J."/>
            <person name="Jouenne T."/>
            <person name="Vaudry H."/>
            <person name="King J.D."/>
            <person name="Conlon J.M."/>
        </authorList>
    </citation>
    <scope>PROTEIN SEQUENCE</scope>
    <scope>FUNCTION</scope>
    <scope>SUBCELLULAR LOCATION</scope>
    <scope>MASS SPECTROMETRY</scope>
    <source>
        <tissue evidence="2">Skin secretion</tissue>
    </source>
</reference>
<keyword id="KW-0903">Direct protein sequencing</keyword>
<keyword id="KW-0964">Secreted</keyword>
<accession>C0HK83</accession>
<evidence type="ECO:0000269" key="1">
    <source>
    </source>
</evidence>
<evidence type="ECO:0000303" key="2">
    <source>
    </source>
</evidence>
<evidence type="ECO:0000305" key="3"/>
<evidence type="ECO:0000305" key="4">
    <source>
    </source>
</evidence>
<feature type="peptide" id="PRO_0000438423" description="Magainin-B1" evidence="1">
    <location>
        <begin position="1"/>
        <end position="21"/>
    </location>
</feature>
<protein>
    <recommendedName>
        <fullName evidence="2">Magainin-B1</fullName>
    </recommendedName>
</protein>
<comment type="function">
    <text evidence="1">Has no antimicrobial activity against tested bacteria.</text>
</comment>
<comment type="subcellular location">
    <subcellularLocation>
        <location evidence="1">Secreted</location>
    </subcellularLocation>
</comment>
<comment type="tissue specificity">
    <text evidence="4">Expressed by the skin glands.</text>
</comment>
<comment type="mass spectrometry" mass="2194.0" method="MALDI" evidence="1"/>
<comment type="similarity">
    <text evidence="3">Belongs to the gastrin/cholecystokinin family. Magainin subfamily.</text>
</comment>
<dbReference type="GO" id="GO:0005576">
    <property type="term" value="C:extracellular region"/>
    <property type="evidence" value="ECO:0007669"/>
    <property type="project" value="UniProtKB-SubCell"/>
</dbReference>
<name>MAGB1_XENBO</name>